<dbReference type="EMBL" id="U36194">
    <property type="protein sequence ID" value="AAA79185.1"/>
    <property type="molecule type" value="mRNA"/>
</dbReference>
<dbReference type="EMBL" id="BC070988">
    <property type="protein sequence ID" value="AAH70988.1"/>
    <property type="molecule type" value="mRNA"/>
</dbReference>
<dbReference type="RefSeq" id="NP_001081396.1">
    <property type="nucleotide sequence ID" value="NM_001087927.1"/>
</dbReference>
<dbReference type="SMR" id="Q6IRB2"/>
<dbReference type="ELM" id="Q6IRB2"/>
<dbReference type="DNASU" id="397813"/>
<dbReference type="GeneID" id="397813"/>
<dbReference type="KEGG" id="xla:397813"/>
<dbReference type="AGR" id="Xenbase:XB-GENE-865756"/>
<dbReference type="CTD" id="397813"/>
<dbReference type="Xenbase" id="XB-GENE-865756">
    <property type="gene designation" value="hes1.L"/>
</dbReference>
<dbReference type="OMA" id="DPMEKSS"/>
<dbReference type="OrthoDB" id="6085656at2759"/>
<dbReference type="Proteomes" id="UP000186698">
    <property type="component" value="Chromosome 5L"/>
</dbReference>
<dbReference type="Bgee" id="397813">
    <property type="expression patterns" value="Expressed in neurula embryo and 19 other cell types or tissues"/>
</dbReference>
<dbReference type="GO" id="GO:0005634">
    <property type="term" value="C:nucleus"/>
    <property type="evidence" value="ECO:0000250"/>
    <property type="project" value="UniProtKB"/>
</dbReference>
<dbReference type="GO" id="GO:0043425">
    <property type="term" value="F:bHLH transcription factor binding"/>
    <property type="evidence" value="ECO:0000353"/>
    <property type="project" value="UniProtKB"/>
</dbReference>
<dbReference type="GO" id="GO:0046982">
    <property type="term" value="F:protein heterodimerization activity"/>
    <property type="evidence" value="ECO:0000353"/>
    <property type="project" value="UniProtKB"/>
</dbReference>
<dbReference type="GO" id="GO:0000978">
    <property type="term" value="F:RNA polymerase II cis-regulatory region sequence-specific DNA binding"/>
    <property type="evidence" value="ECO:0000318"/>
    <property type="project" value="GO_Central"/>
</dbReference>
<dbReference type="GO" id="GO:0043565">
    <property type="term" value="F:sequence-specific DNA binding"/>
    <property type="evidence" value="ECO:0000314"/>
    <property type="project" value="UniProtKB"/>
</dbReference>
<dbReference type="GO" id="GO:0045892">
    <property type="term" value="P:negative regulation of DNA-templated transcription"/>
    <property type="evidence" value="ECO:0000315"/>
    <property type="project" value="UniProtKB"/>
</dbReference>
<dbReference type="GO" id="GO:0048635">
    <property type="term" value="P:negative regulation of muscle organ development"/>
    <property type="evidence" value="ECO:0000315"/>
    <property type="project" value="UniProtKB"/>
</dbReference>
<dbReference type="GO" id="GO:0045665">
    <property type="term" value="P:negative regulation of neuron differentiation"/>
    <property type="evidence" value="ECO:0000318"/>
    <property type="project" value="GO_Central"/>
</dbReference>
<dbReference type="GO" id="GO:0000122">
    <property type="term" value="P:negative regulation of transcription by RNA polymerase II"/>
    <property type="evidence" value="ECO:0000315"/>
    <property type="project" value="UniProtKB"/>
</dbReference>
<dbReference type="GO" id="GO:0007219">
    <property type="term" value="P:Notch signaling pathway"/>
    <property type="evidence" value="ECO:0000315"/>
    <property type="project" value="UniProtKB"/>
</dbReference>
<dbReference type="GO" id="GO:0050767">
    <property type="term" value="P:regulation of neurogenesis"/>
    <property type="evidence" value="ECO:0000318"/>
    <property type="project" value="GO_Central"/>
</dbReference>
<dbReference type="CDD" id="cd11459">
    <property type="entry name" value="bHLH-O_HES1_4"/>
    <property type="match status" value="1"/>
</dbReference>
<dbReference type="FunFam" id="4.10.280.10:FF:000009">
    <property type="entry name" value="Transcription factor HES-1"/>
    <property type="match status" value="1"/>
</dbReference>
<dbReference type="Gene3D" id="6.10.250.980">
    <property type="match status" value="1"/>
</dbReference>
<dbReference type="Gene3D" id="4.10.280.10">
    <property type="entry name" value="Helix-loop-helix DNA-binding domain"/>
    <property type="match status" value="1"/>
</dbReference>
<dbReference type="InterPro" id="IPR011598">
    <property type="entry name" value="bHLH_dom"/>
</dbReference>
<dbReference type="InterPro" id="IPR050370">
    <property type="entry name" value="HES_HEY"/>
</dbReference>
<dbReference type="InterPro" id="IPR036638">
    <property type="entry name" value="HLH_DNA-bd_sf"/>
</dbReference>
<dbReference type="InterPro" id="IPR003650">
    <property type="entry name" value="Orange_dom"/>
</dbReference>
<dbReference type="PANTHER" id="PTHR10985">
    <property type="entry name" value="BASIC HELIX-LOOP-HELIX TRANSCRIPTION FACTOR, HES-RELATED"/>
    <property type="match status" value="1"/>
</dbReference>
<dbReference type="Pfam" id="PF07527">
    <property type="entry name" value="Hairy_orange"/>
    <property type="match status" value="1"/>
</dbReference>
<dbReference type="Pfam" id="PF00010">
    <property type="entry name" value="HLH"/>
    <property type="match status" value="1"/>
</dbReference>
<dbReference type="SMART" id="SM00353">
    <property type="entry name" value="HLH"/>
    <property type="match status" value="1"/>
</dbReference>
<dbReference type="SMART" id="SM00511">
    <property type="entry name" value="ORANGE"/>
    <property type="match status" value="1"/>
</dbReference>
<dbReference type="SUPFAM" id="SSF47459">
    <property type="entry name" value="HLH, helix-loop-helix DNA-binding domain"/>
    <property type="match status" value="1"/>
</dbReference>
<dbReference type="SUPFAM" id="SSF158457">
    <property type="entry name" value="Orange domain-like"/>
    <property type="match status" value="1"/>
</dbReference>
<dbReference type="PROSITE" id="PS50888">
    <property type="entry name" value="BHLH"/>
    <property type="match status" value="1"/>
</dbReference>
<dbReference type="PROSITE" id="PS51054">
    <property type="entry name" value="ORANGE"/>
    <property type="match status" value="1"/>
</dbReference>
<keyword id="KW-0217">Developmental protein</keyword>
<keyword id="KW-0238">DNA-binding</keyword>
<keyword id="KW-0914">Notch signaling pathway</keyword>
<keyword id="KW-0539">Nucleus</keyword>
<keyword id="KW-1185">Reference proteome</keyword>
<keyword id="KW-0678">Repressor</keyword>
<keyword id="KW-0804">Transcription</keyword>
<keyword id="KW-0805">Transcription regulation</keyword>
<comment type="function">
    <text evidence="8 9">Transcriptional repressor of a subset of early mesodermal genes including myod1 and t/bra. Binds DNA on N-box motifs: 5'-CACNAG-3'. Acts as a negative regulator of myogenesis, mediating Notch signaling to repress expression of myod1.</text>
</comment>
<comment type="subunit">
    <text evidence="1 8 11 12 14">Transcription repression requires formation of a complex with a corepressor protein of the Groucho/TLE family (By similarity). Interacts with the bHLH protein hes2, and binds DNA in the form of a heterodimer with the bHLH protein hey1/hrt1. Interacts with the bHLH protein hes6; this interaction may inhibit the transcriptional repressor activity.</text>
</comment>
<comment type="subcellular location">
    <subcellularLocation>
        <location evidence="3 5 6">Nucleus</location>
    </subcellularLocation>
</comment>
<comment type="tissue specificity">
    <text evidence="9 10 12 13">Starting from late neurula stage, weakly expressed in midline neural cells, where expression is restricted to the superficial layer of the prospective floorplate. Expressed in the posterior somitic mesoderm (PSM) at tailbud stage. During early tailbud stages, broadly expressed within the pronephric mesoderm both around and inside the developing pronephros. During late tailbud to early tadpole stages, expressed more ventrally in the pronephros, and although initially expressed in both the lateral and medial layers, by these later stages expression is predominantly in the lateral layer. Pronephric expression is no longer detectable in late tadpoles (stage 35).</text>
</comment>
<comment type="developmental stage">
    <text evidence="9">Expression begins soon after the mid-blastula transition.</text>
</comment>
<comment type="domain">
    <text evidence="2">Has a particular type of basic domain (presence of a helix-interrupting proline) that binds to the N-box (CACNAG), rather than the canonical E-box (CANNTG).</text>
</comment>
<comment type="domain">
    <text evidence="9">The bHLH, as well as cooperation between the central Orange domain and the C-terminal WRPW motif, is required for transcriptional repressor activity.</text>
</comment>
<comment type="domain">
    <text evidence="1">The C-terminal WRPW motif is a transcriptional repression domain necessary for the interaction with Groucho/TLE family members, transcriptional corepressors recruited to specific target DNA by Hairy-related proteins.</text>
</comment>
<reference evidence="21" key="1">
    <citation type="journal article" date="1995" name="Mol. Cell. Biol.">
        <title>Specificity for the hairy/enhancer of split basic helix-loop-helix (bHLH) proteins maps outside the bHLH domain and suggests two separable modes of transcriptional repression.</title>
        <authorList>
            <person name="Dawson S.R."/>
            <person name="Turner D.L."/>
            <person name="Weintraub H."/>
            <person name="Parkhurst S.M."/>
        </authorList>
    </citation>
    <scope>NUCLEOTIDE SEQUENCE [MRNA]</scope>
</reference>
<reference evidence="22" key="2">
    <citation type="submission" date="2004-05" db="EMBL/GenBank/DDBJ databases">
        <authorList>
            <consortium name="NIH - Xenopus Gene Collection (XGC) project"/>
        </authorList>
    </citation>
    <scope>NUCLEOTIDE SEQUENCE [LARGE SCALE MRNA]</scope>
    <source>
        <tissue evidence="22">Kidney</tissue>
    </source>
</reference>
<reference key="3">
    <citation type="journal article" date="2000" name="Development">
        <title>Hes6 acts in a positive feedback loop with the neurogenins to promote neuronal differentiation.</title>
        <authorList>
            <person name="Koyano-Nakagawa N."/>
            <person name="Kim J."/>
            <person name="Anderson D."/>
            <person name="Kintner C."/>
        </authorList>
    </citation>
    <scope>FUNCTION</scope>
    <scope>DNA-BINDING</scope>
    <scope>INTERACTION WITH HES6</scope>
</reference>
<reference key="4">
    <citation type="journal article" date="2001" name="Dev. Cell">
        <title>Molecular targets of vertebrate segmentation: two mechanisms control segmental expression of Xenopus hairy2 during somite formation.</title>
        <authorList>
            <person name="Davis R.L."/>
            <person name="Turner D.L."/>
            <person name="Evans L.M."/>
            <person name="Kirschner M.W."/>
        </authorList>
    </citation>
    <scope>TISSUE SPECIFICITY</scope>
</reference>
<reference evidence="20" key="5">
    <citation type="journal article" date="2001" name="Mech. Dev.">
        <title>Repression of XMyoD expression and myogenesis by Xhairy-1 in Xenopus early embryo.</title>
        <authorList>
            <person name="Umbhauer M."/>
            <person name="Boucaut J.-C."/>
            <person name="Shi D.-L."/>
        </authorList>
    </citation>
    <scope>FUNCTION</scope>
    <scope>TISSUE SPECIFICITY</scope>
    <scope>DEVELOPMENTAL STAGE</scope>
    <scope>DOMAIN FUNCTION</scope>
</reference>
<reference evidence="20" key="6">
    <citation type="journal article" date="2003" name="Dev. Dyn.">
        <title>Identification of BOIP, a novel cDNA highly expressed during spermatogenesis that encodes a protein interacting with the orange domain of the hairy-related transcription factor HRT1/Hey1 in Xenopus and mouse.</title>
        <authorList>
            <person name="Van Wayenbergh R."/>
            <person name="Taelman V."/>
            <person name="Pichon B."/>
            <person name="Fischer A."/>
            <person name="Kricha S."/>
            <person name="Gessler M."/>
            <person name="Christophe D."/>
            <person name="Bellefroid E.J."/>
        </authorList>
    </citation>
    <scope>INTERACTION WITH HEY1</scope>
</reference>
<reference evidence="20" key="7">
    <citation type="journal article" date="2004" name="Dev. Biol.">
        <title>Sequences downstream of the bHLH domain of the Xenopus hairy-related transcription factor-1 act as an extended dimerization domain that contributes to the selection of the partners.</title>
        <authorList>
            <person name="Taelman V."/>
            <person name="Van Wayenbergh R."/>
            <person name="Soelter M."/>
            <person name="Pichon B."/>
            <person name="Pieler T."/>
            <person name="Christophe D."/>
            <person name="Bellefroid E.J."/>
        </authorList>
    </citation>
    <scope>INTERACTION WITH HEY1</scope>
    <scope>TISSUE SPECIFICITY</scope>
</reference>
<reference evidence="20" key="8">
    <citation type="journal article" date="2006" name="Development">
        <title>The Notch-effector HRT1 gene plays a role in glomerular development and patterning of the Xenopus pronephros anlagen.</title>
        <authorList>
            <person name="Taelman V."/>
            <person name="Van Campenhout C."/>
            <person name="Soelter M."/>
            <person name="Pieler T."/>
            <person name="Bellefroid E.J."/>
        </authorList>
    </citation>
    <scope>TISSUE SPECIFICITY</scope>
</reference>
<reference evidence="20" key="9">
    <citation type="journal article" date="2006" name="Development">
        <title>Characterization and function of the bHLH-O protein XHes2: insight into the mechanisms controlling retinal cell fate decision.</title>
        <authorList>
            <person name="Soelter M."/>
            <person name="Locker M."/>
            <person name="Boy S."/>
            <person name="Taelman V."/>
            <person name="Bellefroid E.J."/>
            <person name="Perron M."/>
            <person name="Pieler T."/>
        </authorList>
    </citation>
    <scope>INTERACTION WITH HES2</scope>
</reference>
<feature type="chain" id="PRO_0000370738" description="Transcription factor HES-1-A">
    <location>
        <begin position="1"/>
        <end position="267"/>
    </location>
</feature>
<feature type="domain" description="bHLH" evidence="6">
    <location>
        <begin position="34"/>
        <end position="91"/>
    </location>
</feature>
<feature type="domain" description="Orange" evidence="5">
    <location>
        <begin position="110"/>
        <end position="143"/>
    </location>
</feature>
<feature type="region of interest" description="Disordered" evidence="7">
    <location>
        <begin position="1"/>
        <end position="43"/>
    </location>
</feature>
<feature type="short sequence motif" description="WRPW motif" evidence="4">
    <location>
        <begin position="264"/>
        <end position="267"/>
    </location>
</feature>
<feature type="compositionally biased region" description="Low complexity" evidence="7">
    <location>
        <begin position="10"/>
        <end position="22"/>
    </location>
</feature>
<feature type="compositionally biased region" description="Basic and acidic residues" evidence="7">
    <location>
        <begin position="26"/>
        <end position="35"/>
    </location>
</feature>
<feature type="sequence conflict" description="In Ref. 1; AAA79185." evidence="20" ref="1">
    <original>PTQP</original>
    <variation>LPA</variation>
    <location>
        <begin position="156"/>
        <end position="159"/>
    </location>
</feature>
<feature type="sequence conflict" description="In Ref. 1; AAA79185." evidence="20" ref="1">
    <original>M</original>
    <variation>S</variation>
    <location>
        <position position="255"/>
    </location>
</feature>
<evidence type="ECO:0000250" key="1"/>
<evidence type="ECO:0000250" key="2">
    <source>
        <dbReference type="UniProtKB" id="P14003"/>
    </source>
</evidence>
<evidence type="ECO:0000250" key="3">
    <source>
        <dbReference type="UniProtKB" id="Q14469"/>
    </source>
</evidence>
<evidence type="ECO:0000255" key="4"/>
<evidence type="ECO:0000255" key="5">
    <source>
        <dbReference type="PROSITE-ProRule" id="PRU00380"/>
    </source>
</evidence>
<evidence type="ECO:0000255" key="6">
    <source>
        <dbReference type="PROSITE-ProRule" id="PRU00981"/>
    </source>
</evidence>
<evidence type="ECO:0000256" key="7">
    <source>
        <dbReference type="SAM" id="MobiDB-lite"/>
    </source>
</evidence>
<evidence type="ECO:0000269" key="8">
    <source>
    </source>
</evidence>
<evidence type="ECO:0000269" key="9">
    <source>
    </source>
</evidence>
<evidence type="ECO:0000269" key="10">
    <source>
    </source>
</evidence>
<evidence type="ECO:0000269" key="11">
    <source>
    </source>
</evidence>
<evidence type="ECO:0000269" key="12">
    <source>
    </source>
</evidence>
<evidence type="ECO:0000269" key="13">
    <source>
    </source>
</evidence>
<evidence type="ECO:0000269" key="14">
    <source>
    </source>
</evidence>
<evidence type="ECO:0000303" key="15">
    <source>
    </source>
</evidence>
<evidence type="ECO:0000303" key="16">
    <source>
    </source>
</evidence>
<evidence type="ECO:0000303" key="17">
    <source>
    </source>
</evidence>
<evidence type="ECO:0000303" key="18">
    <source>
    </source>
</evidence>
<evidence type="ECO:0000303" key="19">
    <source>
    </source>
</evidence>
<evidence type="ECO:0000305" key="20"/>
<evidence type="ECO:0000312" key="21">
    <source>
        <dbReference type="EMBL" id="AAA79185.1"/>
    </source>
</evidence>
<evidence type="ECO:0000312" key="22">
    <source>
        <dbReference type="EMBL" id="AAH70988.1"/>
    </source>
</evidence>
<gene>
    <name type="primary">hes1-a</name>
    <name evidence="19" type="synonym">hairy1</name>
</gene>
<organism>
    <name type="scientific">Xenopus laevis</name>
    <name type="common">African clawed frog</name>
    <dbReference type="NCBI Taxonomy" id="8355"/>
    <lineage>
        <taxon>Eukaryota</taxon>
        <taxon>Metazoa</taxon>
        <taxon>Chordata</taxon>
        <taxon>Craniata</taxon>
        <taxon>Vertebrata</taxon>
        <taxon>Euteleostomi</taxon>
        <taxon>Amphibia</taxon>
        <taxon>Batrachia</taxon>
        <taxon>Anura</taxon>
        <taxon>Pipoidea</taxon>
        <taxon>Pipidae</taxon>
        <taxon>Xenopodinae</taxon>
        <taxon>Xenopus</taxon>
        <taxon>Xenopus</taxon>
    </lineage>
</organism>
<sequence>MPADVMEKNSSSPVAATPASVSNTPDKPKTASEHRKSSKPIMEKRRRARINESLGQLKTLILDALKKDSSRHSKLEKADILEMTVKHLRNLQRVQMSAALSTDPSVLGKYRAGFSECMNEVTRFLSTCEGVNTDVRTRLLGHLANCMNQINGMNYPTQPQMPSAAAPHPAYGQPMVQLPGAAPQSSPAPIACKMGGPPVEAAKVYGGFQLVPAPDGQFAFLITNPAFPHNGSVIPVYTNSNVGTALPPSVSPSVMPSVTIDSVWRPW</sequence>
<protein>
    <recommendedName>
        <fullName>Transcription factor HES-1-A</fullName>
    </recommendedName>
    <alternativeName>
        <fullName>Hairy and enhancer of split 1-A</fullName>
    </alternativeName>
    <alternativeName>
        <fullName>Protein hairy-1</fullName>
        <shortName evidence="15">Xhairy-1</shortName>
        <shortName evidence="16 17 18">Xhairy1</shortName>
        <shortName evidence="19">Xlh1</shortName>
    </alternativeName>
</protein>
<name>HES1A_XENLA</name>
<proteinExistence type="evidence at protein level"/>
<accession>Q6IRB2</accession>
<accession>Q91635</accession>